<protein>
    <recommendedName>
        <fullName evidence="1">1-deoxy-D-xylulose 5-phosphate reductoisomerase</fullName>
        <shortName evidence="1">DXP reductoisomerase</shortName>
        <ecNumber evidence="1">1.1.1.267</ecNumber>
    </recommendedName>
    <alternativeName>
        <fullName evidence="1">1-deoxyxylulose-5-phosphate reductoisomerase</fullName>
    </alternativeName>
    <alternativeName>
        <fullName evidence="1">2-C-methyl-D-erythritol 4-phosphate synthase</fullName>
    </alternativeName>
</protein>
<proteinExistence type="inferred from homology"/>
<dbReference type="EC" id="1.1.1.267" evidence="1"/>
<dbReference type="EMBL" id="CP000931">
    <property type="protein sequence ID" value="ABZ77524.1"/>
    <property type="molecule type" value="Genomic_DNA"/>
</dbReference>
<dbReference type="RefSeq" id="WP_012278051.1">
    <property type="nucleotide sequence ID" value="NC_010334.1"/>
</dbReference>
<dbReference type="SMR" id="B0TP77"/>
<dbReference type="STRING" id="458817.Shal_2975"/>
<dbReference type="KEGG" id="shl:Shal_2975"/>
<dbReference type="eggNOG" id="COG0743">
    <property type="taxonomic scope" value="Bacteria"/>
</dbReference>
<dbReference type="HOGENOM" id="CLU_035714_4_0_6"/>
<dbReference type="OrthoDB" id="9806546at2"/>
<dbReference type="UniPathway" id="UPA00056">
    <property type="reaction ID" value="UER00092"/>
</dbReference>
<dbReference type="Proteomes" id="UP000001317">
    <property type="component" value="Chromosome"/>
</dbReference>
<dbReference type="GO" id="GO:0030604">
    <property type="term" value="F:1-deoxy-D-xylulose-5-phosphate reductoisomerase activity"/>
    <property type="evidence" value="ECO:0007669"/>
    <property type="project" value="UniProtKB-UniRule"/>
</dbReference>
<dbReference type="GO" id="GO:0030145">
    <property type="term" value="F:manganese ion binding"/>
    <property type="evidence" value="ECO:0007669"/>
    <property type="project" value="TreeGrafter"/>
</dbReference>
<dbReference type="GO" id="GO:0070402">
    <property type="term" value="F:NADPH binding"/>
    <property type="evidence" value="ECO:0007669"/>
    <property type="project" value="InterPro"/>
</dbReference>
<dbReference type="GO" id="GO:0051484">
    <property type="term" value="P:isopentenyl diphosphate biosynthetic process, methylerythritol 4-phosphate pathway involved in terpenoid biosynthetic process"/>
    <property type="evidence" value="ECO:0007669"/>
    <property type="project" value="TreeGrafter"/>
</dbReference>
<dbReference type="FunFam" id="1.10.1740.10:FF:000004">
    <property type="entry name" value="1-deoxy-D-xylulose 5-phosphate reductoisomerase"/>
    <property type="match status" value="1"/>
</dbReference>
<dbReference type="FunFam" id="3.40.50.720:FF:000045">
    <property type="entry name" value="1-deoxy-D-xylulose 5-phosphate reductoisomerase"/>
    <property type="match status" value="1"/>
</dbReference>
<dbReference type="Gene3D" id="1.10.1740.10">
    <property type="match status" value="1"/>
</dbReference>
<dbReference type="Gene3D" id="3.40.50.720">
    <property type="entry name" value="NAD(P)-binding Rossmann-like Domain"/>
    <property type="match status" value="1"/>
</dbReference>
<dbReference type="HAMAP" id="MF_00183">
    <property type="entry name" value="DXP_reductoisom"/>
    <property type="match status" value="1"/>
</dbReference>
<dbReference type="InterPro" id="IPR003821">
    <property type="entry name" value="DXP_reductoisomerase"/>
</dbReference>
<dbReference type="InterPro" id="IPR013644">
    <property type="entry name" value="DXP_reductoisomerase_C"/>
</dbReference>
<dbReference type="InterPro" id="IPR013512">
    <property type="entry name" value="DXP_reductoisomerase_N"/>
</dbReference>
<dbReference type="InterPro" id="IPR026877">
    <property type="entry name" value="DXPR_C"/>
</dbReference>
<dbReference type="InterPro" id="IPR036169">
    <property type="entry name" value="DXPR_C_sf"/>
</dbReference>
<dbReference type="InterPro" id="IPR036291">
    <property type="entry name" value="NAD(P)-bd_dom_sf"/>
</dbReference>
<dbReference type="NCBIfam" id="TIGR00243">
    <property type="entry name" value="Dxr"/>
    <property type="match status" value="1"/>
</dbReference>
<dbReference type="NCBIfam" id="NF003938">
    <property type="entry name" value="PRK05447.1-1"/>
    <property type="match status" value="1"/>
</dbReference>
<dbReference type="NCBIfam" id="NF009114">
    <property type="entry name" value="PRK12464.1"/>
    <property type="match status" value="1"/>
</dbReference>
<dbReference type="PANTHER" id="PTHR30525">
    <property type="entry name" value="1-DEOXY-D-XYLULOSE 5-PHOSPHATE REDUCTOISOMERASE"/>
    <property type="match status" value="1"/>
</dbReference>
<dbReference type="PANTHER" id="PTHR30525:SF0">
    <property type="entry name" value="1-DEOXY-D-XYLULOSE 5-PHOSPHATE REDUCTOISOMERASE, CHLOROPLASTIC"/>
    <property type="match status" value="1"/>
</dbReference>
<dbReference type="Pfam" id="PF08436">
    <property type="entry name" value="DXP_redisom_C"/>
    <property type="match status" value="1"/>
</dbReference>
<dbReference type="Pfam" id="PF02670">
    <property type="entry name" value="DXP_reductoisom"/>
    <property type="match status" value="1"/>
</dbReference>
<dbReference type="Pfam" id="PF13288">
    <property type="entry name" value="DXPR_C"/>
    <property type="match status" value="1"/>
</dbReference>
<dbReference type="PIRSF" id="PIRSF006205">
    <property type="entry name" value="Dxp_reductismrs"/>
    <property type="match status" value="1"/>
</dbReference>
<dbReference type="SUPFAM" id="SSF69055">
    <property type="entry name" value="1-deoxy-D-xylulose-5-phosphate reductoisomerase, C-terminal domain"/>
    <property type="match status" value="1"/>
</dbReference>
<dbReference type="SUPFAM" id="SSF55347">
    <property type="entry name" value="Glyceraldehyde-3-phosphate dehydrogenase-like, C-terminal domain"/>
    <property type="match status" value="1"/>
</dbReference>
<dbReference type="SUPFAM" id="SSF51735">
    <property type="entry name" value="NAD(P)-binding Rossmann-fold domains"/>
    <property type="match status" value="1"/>
</dbReference>
<name>DXR_SHEHH</name>
<keyword id="KW-0414">Isoprene biosynthesis</keyword>
<keyword id="KW-0464">Manganese</keyword>
<keyword id="KW-0479">Metal-binding</keyword>
<keyword id="KW-0521">NADP</keyword>
<keyword id="KW-0560">Oxidoreductase</keyword>
<organism>
    <name type="scientific">Shewanella halifaxensis (strain HAW-EB4)</name>
    <dbReference type="NCBI Taxonomy" id="458817"/>
    <lineage>
        <taxon>Bacteria</taxon>
        <taxon>Pseudomonadati</taxon>
        <taxon>Pseudomonadota</taxon>
        <taxon>Gammaproteobacteria</taxon>
        <taxon>Alteromonadales</taxon>
        <taxon>Shewanellaceae</taxon>
        <taxon>Shewanella</taxon>
    </lineage>
</organism>
<accession>B0TP77</accession>
<feature type="chain" id="PRO_1000077343" description="1-deoxy-D-xylulose 5-phosphate reductoisomerase">
    <location>
        <begin position="1"/>
        <end position="396"/>
    </location>
</feature>
<feature type="binding site" evidence="1">
    <location>
        <position position="10"/>
    </location>
    <ligand>
        <name>NADPH</name>
        <dbReference type="ChEBI" id="CHEBI:57783"/>
    </ligand>
</feature>
<feature type="binding site" evidence="1">
    <location>
        <position position="11"/>
    </location>
    <ligand>
        <name>NADPH</name>
        <dbReference type="ChEBI" id="CHEBI:57783"/>
    </ligand>
</feature>
<feature type="binding site" evidence="1">
    <location>
        <position position="12"/>
    </location>
    <ligand>
        <name>NADPH</name>
        <dbReference type="ChEBI" id="CHEBI:57783"/>
    </ligand>
</feature>
<feature type="binding site" evidence="1">
    <location>
        <position position="13"/>
    </location>
    <ligand>
        <name>NADPH</name>
        <dbReference type="ChEBI" id="CHEBI:57783"/>
    </ligand>
</feature>
<feature type="binding site" evidence="1">
    <location>
        <position position="38"/>
    </location>
    <ligand>
        <name>NADPH</name>
        <dbReference type="ChEBI" id="CHEBI:57783"/>
    </ligand>
</feature>
<feature type="binding site" evidence="1">
    <location>
        <position position="123"/>
    </location>
    <ligand>
        <name>NADPH</name>
        <dbReference type="ChEBI" id="CHEBI:57783"/>
    </ligand>
</feature>
<feature type="binding site" evidence="1">
    <location>
        <position position="124"/>
    </location>
    <ligand>
        <name>1-deoxy-D-xylulose 5-phosphate</name>
        <dbReference type="ChEBI" id="CHEBI:57792"/>
    </ligand>
</feature>
<feature type="binding site" evidence="1">
    <location>
        <position position="125"/>
    </location>
    <ligand>
        <name>NADPH</name>
        <dbReference type="ChEBI" id="CHEBI:57783"/>
    </ligand>
</feature>
<feature type="binding site" evidence="1">
    <location>
        <position position="149"/>
    </location>
    <ligand>
        <name>Mn(2+)</name>
        <dbReference type="ChEBI" id="CHEBI:29035"/>
    </ligand>
</feature>
<feature type="binding site" evidence="1">
    <location>
        <position position="150"/>
    </location>
    <ligand>
        <name>1-deoxy-D-xylulose 5-phosphate</name>
        <dbReference type="ChEBI" id="CHEBI:57792"/>
    </ligand>
</feature>
<feature type="binding site" evidence="1">
    <location>
        <position position="151"/>
    </location>
    <ligand>
        <name>1-deoxy-D-xylulose 5-phosphate</name>
        <dbReference type="ChEBI" id="CHEBI:57792"/>
    </ligand>
</feature>
<feature type="binding site" evidence="1">
    <location>
        <position position="151"/>
    </location>
    <ligand>
        <name>Mn(2+)</name>
        <dbReference type="ChEBI" id="CHEBI:29035"/>
    </ligand>
</feature>
<feature type="binding site" evidence="1">
    <location>
        <position position="185"/>
    </location>
    <ligand>
        <name>1-deoxy-D-xylulose 5-phosphate</name>
        <dbReference type="ChEBI" id="CHEBI:57792"/>
    </ligand>
</feature>
<feature type="binding site" evidence="1">
    <location>
        <position position="208"/>
    </location>
    <ligand>
        <name>1-deoxy-D-xylulose 5-phosphate</name>
        <dbReference type="ChEBI" id="CHEBI:57792"/>
    </ligand>
</feature>
<feature type="binding site" evidence="1">
    <location>
        <position position="214"/>
    </location>
    <ligand>
        <name>NADPH</name>
        <dbReference type="ChEBI" id="CHEBI:57783"/>
    </ligand>
</feature>
<feature type="binding site" evidence="1">
    <location>
        <position position="221"/>
    </location>
    <ligand>
        <name>1-deoxy-D-xylulose 5-phosphate</name>
        <dbReference type="ChEBI" id="CHEBI:57792"/>
    </ligand>
</feature>
<feature type="binding site" evidence="1">
    <location>
        <position position="226"/>
    </location>
    <ligand>
        <name>1-deoxy-D-xylulose 5-phosphate</name>
        <dbReference type="ChEBI" id="CHEBI:57792"/>
    </ligand>
</feature>
<feature type="binding site" evidence="1">
    <location>
        <position position="227"/>
    </location>
    <ligand>
        <name>1-deoxy-D-xylulose 5-phosphate</name>
        <dbReference type="ChEBI" id="CHEBI:57792"/>
    </ligand>
</feature>
<feature type="binding site" evidence="1">
    <location>
        <position position="230"/>
    </location>
    <ligand>
        <name>1-deoxy-D-xylulose 5-phosphate</name>
        <dbReference type="ChEBI" id="CHEBI:57792"/>
    </ligand>
</feature>
<feature type="binding site" evidence="1">
    <location>
        <position position="230"/>
    </location>
    <ligand>
        <name>Mn(2+)</name>
        <dbReference type="ChEBI" id="CHEBI:29035"/>
    </ligand>
</feature>
<reference key="1">
    <citation type="submission" date="2008-01" db="EMBL/GenBank/DDBJ databases">
        <title>Complete sequence of Shewanella halifaxensis HAW-EB4.</title>
        <authorList>
            <consortium name="US DOE Joint Genome Institute"/>
            <person name="Copeland A."/>
            <person name="Lucas S."/>
            <person name="Lapidus A."/>
            <person name="Glavina del Rio T."/>
            <person name="Dalin E."/>
            <person name="Tice H."/>
            <person name="Bruce D."/>
            <person name="Goodwin L."/>
            <person name="Pitluck S."/>
            <person name="Sims D."/>
            <person name="Brettin T."/>
            <person name="Detter J.C."/>
            <person name="Han C."/>
            <person name="Kuske C.R."/>
            <person name="Schmutz J."/>
            <person name="Larimer F."/>
            <person name="Land M."/>
            <person name="Hauser L."/>
            <person name="Kyrpides N."/>
            <person name="Kim E."/>
            <person name="Zhao J.-S."/>
            <person name="Richardson P."/>
        </authorList>
    </citation>
    <scope>NUCLEOTIDE SEQUENCE [LARGE SCALE GENOMIC DNA]</scope>
    <source>
        <strain>HAW-EB4</strain>
    </source>
</reference>
<sequence>MQNMVILGATGSIGASTLSVVACNPEQYKVYALVANTNVAKMLEICIAHQPKIAHMVDAQAAQSLKQQLPSHLDIEVTTGEDELLSLVSSSDVDTVMAAIVGAAGLPSTLAAVNAGKRVLLANKESLVMSGQLFIEAMQKSGAQVLPVDSEHNAIFQCLSERSQLEIGRCDLAGAGVSHILLTGSGGPFLTSDLATLSAMTPEQACKHPNWSMGRKISVDSATMMNKGLEYIEARWLFNASSEQLKVVIHPQSVIHSMVQYRDGSVLAQLGNPDMRTPIAHCMAFPQRINSGVEPLDFFKVGQLSFLEPDFTRFPCLALAIEACKQGQEATTVLNAANEISVQAFLDGKIRFTDIARINEQSLMNTATHPLNSIDDILALDFQSRQSTLDAITKLN</sequence>
<evidence type="ECO:0000255" key="1">
    <source>
        <dbReference type="HAMAP-Rule" id="MF_00183"/>
    </source>
</evidence>
<gene>
    <name evidence="1" type="primary">dxr</name>
    <name type="ordered locus">Shal_2975</name>
</gene>
<comment type="function">
    <text evidence="1">Catalyzes the NADPH-dependent rearrangement and reduction of 1-deoxy-D-xylulose-5-phosphate (DXP) to 2-C-methyl-D-erythritol 4-phosphate (MEP).</text>
</comment>
<comment type="catalytic activity">
    <reaction evidence="1">
        <text>2-C-methyl-D-erythritol 4-phosphate + NADP(+) = 1-deoxy-D-xylulose 5-phosphate + NADPH + H(+)</text>
        <dbReference type="Rhea" id="RHEA:13717"/>
        <dbReference type="ChEBI" id="CHEBI:15378"/>
        <dbReference type="ChEBI" id="CHEBI:57783"/>
        <dbReference type="ChEBI" id="CHEBI:57792"/>
        <dbReference type="ChEBI" id="CHEBI:58262"/>
        <dbReference type="ChEBI" id="CHEBI:58349"/>
        <dbReference type="EC" id="1.1.1.267"/>
    </reaction>
    <physiologicalReaction direction="right-to-left" evidence="1">
        <dbReference type="Rhea" id="RHEA:13719"/>
    </physiologicalReaction>
</comment>
<comment type="cofactor">
    <cofactor evidence="1">
        <name>Mg(2+)</name>
        <dbReference type="ChEBI" id="CHEBI:18420"/>
    </cofactor>
    <cofactor evidence="1">
        <name>Mn(2+)</name>
        <dbReference type="ChEBI" id="CHEBI:29035"/>
    </cofactor>
</comment>
<comment type="pathway">
    <text evidence="1">Isoprenoid biosynthesis; isopentenyl diphosphate biosynthesis via DXP pathway; isopentenyl diphosphate from 1-deoxy-D-xylulose 5-phosphate: step 1/6.</text>
</comment>
<comment type="similarity">
    <text evidence="1">Belongs to the DXR family.</text>
</comment>